<gene>
    <name type="primary">isdH</name>
    <name type="synonym">harA</name>
    <name type="synonym">sasI</name>
    <name type="ordered locus">SA1552</name>
</gene>
<organism>
    <name type="scientific">Staphylococcus aureus (strain N315)</name>
    <dbReference type="NCBI Taxonomy" id="158879"/>
    <lineage>
        <taxon>Bacteria</taxon>
        <taxon>Bacillati</taxon>
        <taxon>Bacillota</taxon>
        <taxon>Bacilli</taxon>
        <taxon>Bacillales</taxon>
        <taxon>Staphylococcaceae</taxon>
        <taxon>Staphylococcus</taxon>
    </lineage>
</organism>
<feature type="signal peptide" evidence="2">
    <location>
        <begin position="1"/>
        <end position="40"/>
    </location>
</feature>
<feature type="chain" id="PRO_0000285191" description="Iron-regulated surface determinant protein H">
    <location>
        <begin position="41"/>
        <end position="860"/>
    </location>
</feature>
<feature type="propeptide" id="PRO_0000285192" description="Removed by sortase" evidence="4">
    <location>
        <begin position="861"/>
        <end position="891"/>
    </location>
</feature>
<feature type="domain" description="NEAT 1" evidence="3">
    <location>
        <begin position="105"/>
        <end position="232"/>
    </location>
</feature>
<feature type="domain" description="NEAT 2" evidence="3">
    <location>
        <begin position="345"/>
        <end position="471"/>
    </location>
</feature>
<feature type="domain" description="NEAT 3" evidence="3">
    <location>
        <begin position="543"/>
        <end position="660"/>
    </location>
</feature>
<feature type="region of interest" description="Disordered" evidence="5">
    <location>
        <begin position="42"/>
        <end position="77"/>
    </location>
</feature>
<feature type="region of interest" description="Disordered" evidence="5">
    <location>
        <begin position="239"/>
        <end position="324"/>
    </location>
</feature>
<feature type="region of interest" description="Disordered" evidence="5">
    <location>
        <begin position="657"/>
        <end position="718"/>
    </location>
</feature>
<feature type="region of interest" description="Disordered" evidence="5">
    <location>
        <begin position="752"/>
        <end position="777"/>
    </location>
</feature>
<feature type="region of interest" description="Disordered" evidence="5">
    <location>
        <begin position="835"/>
        <end position="864"/>
    </location>
</feature>
<feature type="short sequence motif" description="LPXTG sorting signal" evidence="4">
    <location>
        <begin position="857"/>
        <end position="861"/>
    </location>
</feature>
<feature type="compositionally biased region" description="Low complexity" evidence="5">
    <location>
        <begin position="53"/>
        <end position="63"/>
    </location>
</feature>
<feature type="compositionally biased region" description="Polar residues" evidence="5">
    <location>
        <begin position="64"/>
        <end position="77"/>
    </location>
</feature>
<feature type="compositionally biased region" description="Low complexity" evidence="5">
    <location>
        <begin position="240"/>
        <end position="276"/>
    </location>
</feature>
<feature type="compositionally biased region" description="Polar residues" evidence="5">
    <location>
        <begin position="277"/>
        <end position="323"/>
    </location>
</feature>
<feature type="compositionally biased region" description="Polar residues" evidence="5">
    <location>
        <begin position="663"/>
        <end position="677"/>
    </location>
</feature>
<feature type="compositionally biased region" description="Polar residues" evidence="5">
    <location>
        <begin position="687"/>
        <end position="697"/>
    </location>
</feature>
<feature type="compositionally biased region" description="Basic and acidic residues" evidence="5">
    <location>
        <begin position="698"/>
        <end position="718"/>
    </location>
</feature>
<feature type="compositionally biased region" description="Basic and acidic residues" evidence="5">
    <location>
        <begin position="835"/>
        <end position="850"/>
    </location>
</feature>
<feature type="compositionally biased region" description="Polar residues" evidence="5">
    <location>
        <begin position="851"/>
        <end position="864"/>
    </location>
</feature>
<feature type="modified residue" description="Pentaglycyl murein peptidoglycan amidated threonine" evidence="4">
    <location>
        <position position="860"/>
    </location>
</feature>
<feature type="helix" evidence="7">
    <location>
        <begin position="90"/>
        <end position="93"/>
    </location>
</feature>
<feature type="helix" evidence="7">
    <location>
        <begin position="97"/>
        <end position="99"/>
    </location>
</feature>
<feature type="strand" evidence="7">
    <location>
        <begin position="109"/>
        <end position="112"/>
    </location>
</feature>
<feature type="strand" evidence="7">
    <location>
        <begin position="114"/>
        <end position="117"/>
    </location>
</feature>
<feature type="strand" evidence="7">
    <location>
        <begin position="121"/>
        <end position="123"/>
    </location>
</feature>
<feature type="helix" evidence="7">
    <location>
        <begin position="125"/>
        <end position="130"/>
    </location>
</feature>
<feature type="strand" evidence="7">
    <location>
        <begin position="133"/>
        <end position="138"/>
    </location>
</feature>
<feature type="strand" evidence="7">
    <location>
        <begin position="141"/>
        <end position="151"/>
    </location>
</feature>
<feature type="helix" evidence="7">
    <location>
        <begin position="153"/>
        <end position="155"/>
    </location>
</feature>
<feature type="strand" evidence="7">
    <location>
        <begin position="156"/>
        <end position="163"/>
    </location>
</feature>
<feature type="strand" evidence="7">
    <location>
        <begin position="171"/>
        <end position="176"/>
    </location>
</feature>
<feature type="turn" evidence="7">
    <location>
        <begin position="177"/>
        <end position="180"/>
    </location>
</feature>
<feature type="strand" evidence="7">
    <location>
        <begin position="182"/>
        <end position="189"/>
    </location>
</feature>
<feature type="strand" evidence="7">
    <location>
        <begin position="195"/>
        <end position="203"/>
    </location>
</feature>
<feature type="strand" evidence="7">
    <location>
        <begin position="209"/>
        <end position="221"/>
    </location>
</feature>
<reference key="1">
    <citation type="journal article" date="2001" name="Lancet">
        <title>Whole genome sequencing of meticillin-resistant Staphylococcus aureus.</title>
        <authorList>
            <person name="Kuroda M."/>
            <person name="Ohta T."/>
            <person name="Uchiyama I."/>
            <person name="Baba T."/>
            <person name="Yuzawa H."/>
            <person name="Kobayashi I."/>
            <person name="Cui L."/>
            <person name="Oguchi A."/>
            <person name="Aoki K."/>
            <person name="Nagai Y."/>
            <person name="Lian J.-Q."/>
            <person name="Ito T."/>
            <person name="Kanamori M."/>
            <person name="Matsumaru H."/>
            <person name="Maruyama A."/>
            <person name="Murakami H."/>
            <person name="Hosoyama A."/>
            <person name="Mizutani-Ui Y."/>
            <person name="Takahashi N.K."/>
            <person name="Sawano T."/>
            <person name="Inoue R."/>
            <person name="Kaito C."/>
            <person name="Sekimizu K."/>
            <person name="Hirakawa H."/>
            <person name="Kuhara S."/>
            <person name="Goto S."/>
            <person name="Yabuzaki J."/>
            <person name="Kanehisa M."/>
            <person name="Yamashita A."/>
            <person name="Oshima K."/>
            <person name="Furuya K."/>
            <person name="Yoshino C."/>
            <person name="Shiba T."/>
            <person name="Hattori M."/>
            <person name="Ogasawara N."/>
            <person name="Hayashi H."/>
            <person name="Hiramatsu K."/>
        </authorList>
    </citation>
    <scope>NUCLEOTIDE SEQUENCE [LARGE SCALE GENOMIC DNA]</scope>
    <source>
        <strain>N315</strain>
    </source>
</reference>
<accession>Q99TD3</accession>
<name>ISDH_STAAN</name>
<evidence type="ECO:0000250" key="1"/>
<evidence type="ECO:0000255" key="2"/>
<evidence type="ECO:0000255" key="3">
    <source>
        <dbReference type="PROSITE-ProRule" id="PRU00337"/>
    </source>
</evidence>
<evidence type="ECO:0000255" key="4">
    <source>
        <dbReference type="PROSITE-ProRule" id="PRU00477"/>
    </source>
</evidence>
<evidence type="ECO:0000256" key="5">
    <source>
        <dbReference type="SAM" id="MobiDB-lite"/>
    </source>
</evidence>
<evidence type="ECO:0000305" key="6"/>
<evidence type="ECO:0007829" key="7">
    <source>
        <dbReference type="PDB" id="4WJG"/>
    </source>
</evidence>
<protein>
    <recommendedName>
        <fullName>Iron-regulated surface determinant protein H</fullName>
    </recommendedName>
    <alternativeName>
        <fullName>Haptoglobin receptor A</fullName>
    </alternativeName>
    <alternativeName>
        <fullName>Staphylococcus aureus surface protein I</fullName>
    </alternativeName>
</protein>
<keyword id="KW-0002">3D-structure</keyword>
<keyword id="KW-0134">Cell wall</keyword>
<keyword id="KW-0572">Peptidoglycan-anchor</keyword>
<keyword id="KW-0677">Repeat</keyword>
<keyword id="KW-0964">Secreted</keyword>
<keyword id="KW-0732">Signal</keyword>
<proteinExistence type="evidence at protein level"/>
<comment type="function">
    <text evidence="1">Binds human plasma haptoglobin-hemoglobin complexes, haptoglobin and hemoglobin. Binds haptoglobin-hemoglobin complexes with significantly higher affinity than haptoglobin alone (By similarity).</text>
</comment>
<comment type="subcellular location">
    <subcellularLocation>
        <location evidence="6">Secreted</location>
        <location evidence="6">Cell wall</location>
        <topology evidence="6">Peptidoglycan-anchor</topology>
    </subcellularLocation>
</comment>
<comment type="domain">
    <text evidence="1">The NEAT 1 domain binds with higher affinity than the NEAT 2 domain haptoglobin-hemoglobin complexes, haptoglobin and hemoglobin.</text>
</comment>
<comment type="similarity">
    <text evidence="6">Belongs to the IsdH family.</text>
</comment>
<sequence length="891" mass="100467">MNKHHPKLRSFYSIRKSTLGVASVIVSTLFLITSQHQAQAAENTNTSDKISENQNNNATTTQQPKDTNQTQPATQPVITAKNYPAADESLKDAIKDPALENKEHDIGPREQVNFQLLDKNNETQYYHFFSIKDPADVYYTKKKAEVELDINTASTWKKFEVYENNQKLPVRLVSYSPVPEDHAYIRFPVSDGTQELKIVSSTQIDDGEETNYDYTKLVFAKPIYNDPSLVKSDTNDAVVTNDQSSSDASNQTNTNTSNQNTSTTNNANNQPQATTNMSQPAQPKSSANADQASSQPAHETNSNGNTNDKTNESSNQSDVNQQYPPADESLQDAIKNPAIIDKEHTADNWRPIDFQMKNDKGERQFYHYASTVEPATVIFTKTGPVIELGLKTASTWKKFEVYEGDKKLPVELVSYDSDKDYAYIRFPVSNGTRDVKNVSSIEYGENIHEDYDYTLMVFAQPITNNPDDYVDEETYNLQKLLAPYHKAKTLERQVYELEKLQEKLPEKYKAEYKKKLDQTRVELADQVKSAVTEFENVTPTNDQLTDLQEAHFVVFESEENSESVMDGFVEHPFYTATLNGQKYVVMKTKDDSYWKDLIVEGKRVTTVSKDPKNNSRTLIFPYIPDKAVYNAIVKVVVANIGYEGQYHVRIINQDINTKDDDTSQNNTSEPLNVQTGQEGKVADTDVAENSSTATNPKDASDKADVIEPESDVVKDADNNIDKDVQHDVDHLSDMSDNNHFDKYDLKEMDTQIAKDTDRNVDNSVGMSSNVDTDKDSNKNKDKVIQLAHIADKNNHTGKAAKLDVVKQNYNNTDKVTDKKTTEHLPSDIHKTVDKTVKTKEKAGTPSKENKLSQSKMLPKTGETTSSQSWWGLYALLGMLALFIPKFRKESK</sequence>
<dbReference type="EMBL" id="BA000018">
    <property type="protein sequence ID" value="BAB42820.1"/>
    <property type="molecule type" value="Genomic_DNA"/>
</dbReference>
<dbReference type="PIR" id="G89957">
    <property type="entry name" value="G89957"/>
</dbReference>
<dbReference type="RefSeq" id="WP_001032807.1">
    <property type="nucleotide sequence ID" value="NC_002745.2"/>
</dbReference>
<dbReference type="PDB" id="4WJG">
    <property type="method" value="X-ray"/>
    <property type="resolution" value="3.10 A"/>
    <property type="chains" value="3/D/I/N/S/X=86-229"/>
</dbReference>
<dbReference type="PDBsum" id="4WJG"/>
<dbReference type="SMR" id="Q99TD3"/>
<dbReference type="EnsemblBacteria" id="BAB42820">
    <property type="protein sequence ID" value="BAB42820"/>
    <property type="gene ID" value="BAB42820"/>
</dbReference>
<dbReference type="KEGG" id="sau:SA1552"/>
<dbReference type="HOGENOM" id="CLU_016167_1_0_9"/>
<dbReference type="EvolutionaryTrace" id="Q99TD3"/>
<dbReference type="GO" id="GO:0005576">
    <property type="term" value="C:extracellular region"/>
    <property type="evidence" value="ECO:0007669"/>
    <property type="project" value="UniProtKB-KW"/>
</dbReference>
<dbReference type="GO" id="GO:0020037">
    <property type="term" value="F:heme binding"/>
    <property type="evidence" value="ECO:0007669"/>
    <property type="project" value="InterPro"/>
</dbReference>
<dbReference type="CDD" id="cd06920">
    <property type="entry name" value="NEAT"/>
    <property type="match status" value="1"/>
</dbReference>
<dbReference type="Gene3D" id="1.20.58.1270">
    <property type="match status" value="1"/>
</dbReference>
<dbReference type="Gene3D" id="2.60.40.1850">
    <property type="match status" value="3"/>
</dbReference>
<dbReference type="InterPro" id="IPR048652">
    <property type="entry name" value="Isd_H_B_linker"/>
</dbReference>
<dbReference type="InterPro" id="IPR050436">
    <property type="entry name" value="IsdA"/>
</dbReference>
<dbReference type="InterPro" id="IPR019930">
    <property type="entry name" value="IsdH"/>
</dbReference>
<dbReference type="InterPro" id="IPR019931">
    <property type="entry name" value="LPXTG_anchor"/>
</dbReference>
<dbReference type="InterPro" id="IPR006635">
    <property type="entry name" value="NEAT_dom"/>
</dbReference>
<dbReference type="InterPro" id="IPR037250">
    <property type="entry name" value="NEAT_dom_sf"/>
</dbReference>
<dbReference type="InterPro" id="IPR005877">
    <property type="entry name" value="YSIRK_signal_dom"/>
</dbReference>
<dbReference type="NCBIfam" id="TIGR03658">
    <property type="entry name" value="IsdH_HarA"/>
    <property type="match status" value="1"/>
</dbReference>
<dbReference type="NCBIfam" id="TIGR01167">
    <property type="entry name" value="LPXTG_anchor"/>
    <property type="match status" value="1"/>
</dbReference>
<dbReference type="NCBIfam" id="TIGR01168">
    <property type="entry name" value="YSIRK_signal"/>
    <property type="match status" value="1"/>
</dbReference>
<dbReference type="PANTHER" id="PTHR37824">
    <property type="entry name" value="IRON-REGULATED SURFACE DETERMINANT PROTEIN C"/>
    <property type="match status" value="1"/>
</dbReference>
<dbReference type="PANTHER" id="PTHR37824:SF1">
    <property type="entry name" value="IRON-REGULATED SURFACE DETERMINANT PROTEIN C"/>
    <property type="match status" value="1"/>
</dbReference>
<dbReference type="Pfam" id="PF20861">
    <property type="entry name" value="Isd_H_B_linker"/>
    <property type="match status" value="1"/>
</dbReference>
<dbReference type="Pfam" id="PF05031">
    <property type="entry name" value="NEAT"/>
    <property type="match status" value="3"/>
</dbReference>
<dbReference type="Pfam" id="PF04650">
    <property type="entry name" value="YSIRK_signal"/>
    <property type="match status" value="1"/>
</dbReference>
<dbReference type="SMART" id="SM00725">
    <property type="entry name" value="NEAT"/>
    <property type="match status" value="3"/>
</dbReference>
<dbReference type="SUPFAM" id="SSF158911">
    <property type="entry name" value="NEAT domain-like"/>
    <property type="match status" value="3"/>
</dbReference>
<dbReference type="PROSITE" id="PS50847">
    <property type="entry name" value="GRAM_POS_ANCHORING"/>
    <property type="match status" value="1"/>
</dbReference>
<dbReference type="PROSITE" id="PS50978">
    <property type="entry name" value="NEAT"/>
    <property type="match status" value="3"/>
</dbReference>